<organism>
    <name type="scientific">Homo sapiens</name>
    <name type="common">Human</name>
    <dbReference type="NCBI Taxonomy" id="9606"/>
    <lineage>
        <taxon>Eukaryota</taxon>
        <taxon>Metazoa</taxon>
        <taxon>Chordata</taxon>
        <taxon>Craniata</taxon>
        <taxon>Vertebrata</taxon>
        <taxon>Euteleostomi</taxon>
        <taxon>Mammalia</taxon>
        <taxon>Eutheria</taxon>
        <taxon>Euarchontoglires</taxon>
        <taxon>Primates</taxon>
        <taxon>Haplorrhini</taxon>
        <taxon>Catarrhini</taxon>
        <taxon>Hominidae</taxon>
        <taxon>Homo</taxon>
    </lineage>
</organism>
<evidence type="ECO:0000250" key="1"/>
<evidence type="ECO:0000250" key="2">
    <source>
        <dbReference type="UniProtKB" id="Q8R5A3"/>
    </source>
</evidence>
<evidence type="ECO:0000255" key="3">
    <source>
        <dbReference type="PROSITE-ProRule" id="PRU00145"/>
    </source>
</evidence>
<evidence type="ECO:0000255" key="4">
    <source>
        <dbReference type="PROSITE-ProRule" id="PRU00166"/>
    </source>
</evidence>
<evidence type="ECO:0000256" key="5">
    <source>
        <dbReference type="SAM" id="MobiDB-lite"/>
    </source>
</evidence>
<evidence type="ECO:0000269" key="6">
    <source>
    </source>
</evidence>
<evidence type="ECO:0000269" key="7">
    <source>
    </source>
</evidence>
<evidence type="ECO:0000269" key="8">
    <source>
    </source>
</evidence>
<evidence type="ECO:0000303" key="9">
    <source>
    </source>
</evidence>
<evidence type="ECO:0000305" key="10"/>
<evidence type="ECO:0007744" key="11">
    <source>
    </source>
</evidence>
<evidence type="ECO:0007744" key="12">
    <source>
    </source>
</evidence>
<evidence type="ECO:0007829" key="13">
    <source>
        <dbReference type="PDB" id="3ZDL"/>
    </source>
</evidence>
<keyword id="KW-0002">3D-structure</keyword>
<keyword id="KW-0025">Alternative splicing</keyword>
<keyword id="KW-0965">Cell junction</keyword>
<keyword id="KW-1003">Cell membrane</keyword>
<keyword id="KW-0966">Cell projection</keyword>
<keyword id="KW-0963">Cytoplasm</keyword>
<keyword id="KW-0206">Cytoskeleton</keyword>
<keyword id="KW-0472">Membrane</keyword>
<keyword id="KW-0597">Phosphoprotein</keyword>
<keyword id="KW-1267">Proteomics identification</keyword>
<keyword id="KW-1185">Reference proteome</keyword>
<accession>Q7Z5R6</accession>
<accession>Q8IWS8</accession>
<accession>Q8IYL7</accession>
<accession>Q8IZZ7</accession>
<reference key="1">
    <citation type="journal article" date="2003" name="J. Biol. Chem.">
        <title>The retinoic acid-responsive proline-rich protein is identified in promyeloleukemic HL-60 cells.</title>
        <authorList>
            <person name="Inagaki T."/>
            <person name="Suzuki S."/>
            <person name="Miyamoto T."/>
            <person name="Takeda T."/>
            <person name="Yamashita K."/>
            <person name="Komatsu A."/>
            <person name="Yamauchi K."/>
            <person name="Hashizume K."/>
        </authorList>
    </citation>
    <scope>NUCLEOTIDE SEQUENCE [MRNA] (ISOFORM 1)</scope>
    <scope>FUNCTION</scope>
    <scope>TISSUE SPECIFICITY</scope>
    <source>
        <tissue>Thymus</tissue>
    </source>
</reference>
<reference key="2">
    <citation type="journal article" date="2004" name="Dev. Cell">
        <title>RIAM, an Ena/VASP and profilin ligand, interacts with Rap1-GTP and mediates Rap1-induced adhesion.</title>
        <authorList>
            <person name="Lafuente E.M."/>
            <person name="van Puijenbroek A.A."/>
            <person name="Krause M."/>
            <person name="Carman C.V."/>
            <person name="Freeman G.J."/>
            <person name="Berezovskaya A."/>
            <person name="Constantine E."/>
            <person name="Springer T.A."/>
            <person name="Gertler F.B."/>
            <person name="Boussiotis V.A."/>
        </authorList>
    </citation>
    <scope>NUCLEOTIDE SEQUENCE [MRNA] (ISOFORM 1)</scope>
    <scope>FUNCTION</scope>
    <scope>SUBCELLULAR LOCATION</scope>
    <scope>TISSUE SPECIFICITY</scope>
    <scope>INTERACTION WITH RAP1A; PFN1; VASP AND ENAH</scope>
    <source>
        <tissue>T-cell</tissue>
    </source>
</reference>
<reference key="3">
    <citation type="journal article" date="2005" name="FEBS Lett.">
        <title>PREL1 provides a link from Ras signalling to the actin cytoskeleton via Ena/VASP proteins.</title>
        <authorList>
            <person name="Jenzora A."/>
            <person name="Behrendt B."/>
            <person name="Small J.V."/>
            <person name="Wehland J."/>
            <person name="Stradal T.E."/>
        </authorList>
    </citation>
    <scope>NUCLEOTIDE SEQUENCE [MRNA] (ISOFORM 1)</scope>
    <source>
        <tissue>Cervix carcinoma</tissue>
    </source>
</reference>
<reference key="4">
    <citation type="journal article" date="2004" name="Nature">
        <title>The DNA sequence and comparative analysis of human chromosome 10.</title>
        <authorList>
            <person name="Deloukas P."/>
            <person name="Earthrowl M.E."/>
            <person name="Grafham D.V."/>
            <person name="Rubenfield M."/>
            <person name="French L."/>
            <person name="Steward C.A."/>
            <person name="Sims S.K."/>
            <person name="Jones M.C."/>
            <person name="Searle S."/>
            <person name="Scott C."/>
            <person name="Howe K."/>
            <person name="Hunt S.E."/>
            <person name="Andrews T.D."/>
            <person name="Gilbert J.G.R."/>
            <person name="Swarbreck D."/>
            <person name="Ashurst J.L."/>
            <person name="Taylor A."/>
            <person name="Battles J."/>
            <person name="Bird C.P."/>
            <person name="Ainscough R."/>
            <person name="Almeida J.P."/>
            <person name="Ashwell R.I.S."/>
            <person name="Ambrose K.D."/>
            <person name="Babbage A.K."/>
            <person name="Bagguley C.L."/>
            <person name="Bailey J."/>
            <person name="Banerjee R."/>
            <person name="Bates K."/>
            <person name="Beasley H."/>
            <person name="Bray-Allen S."/>
            <person name="Brown A.J."/>
            <person name="Brown J.Y."/>
            <person name="Burford D.C."/>
            <person name="Burrill W."/>
            <person name="Burton J."/>
            <person name="Cahill P."/>
            <person name="Camire D."/>
            <person name="Carter N.P."/>
            <person name="Chapman J.C."/>
            <person name="Clark S.Y."/>
            <person name="Clarke G."/>
            <person name="Clee C.M."/>
            <person name="Clegg S."/>
            <person name="Corby N."/>
            <person name="Coulson A."/>
            <person name="Dhami P."/>
            <person name="Dutta I."/>
            <person name="Dunn M."/>
            <person name="Faulkner L."/>
            <person name="Frankish A."/>
            <person name="Frankland J.A."/>
            <person name="Garner P."/>
            <person name="Garnett J."/>
            <person name="Gribble S."/>
            <person name="Griffiths C."/>
            <person name="Grocock R."/>
            <person name="Gustafson E."/>
            <person name="Hammond S."/>
            <person name="Harley J.L."/>
            <person name="Hart E."/>
            <person name="Heath P.D."/>
            <person name="Ho T.P."/>
            <person name="Hopkins B."/>
            <person name="Horne J."/>
            <person name="Howden P.J."/>
            <person name="Huckle E."/>
            <person name="Hynds C."/>
            <person name="Johnson C."/>
            <person name="Johnson D."/>
            <person name="Kana A."/>
            <person name="Kay M."/>
            <person name="Kimberley A.M."/>
            <person name="Kershaw J.K."/>
            <person name="Kokkinaki M."/>
            <person name="Laird G.K."/>
            <person name="Lawlor S."/>
            <person name="Lee H.M."/>
            <person name="Leongamornlert D.A."/>
            <person name="Laird G."/>
            <person name="Lloyd C."/>
            <person name="Lloyd D.M."/>
            <person name="Loveland J."/>
            <person name="Lovell J."/>
            <person name="McLaren S."/>
            <person name="McLay K.E."/>
            <person name="McMurray A."/>
            <person name="Mashreghi-Mohammadi M."/>
            <person name="Matthews L."/>
            <person name="Milne S."/>
            <person name="Nickerson T."/>
            <person name="Nguyen M."/>
            <person name="Overton-Larty E."/>
            <person name="Palmer S.A."/>
            <person name="Pearce A.V."/>
            <person name="Peck A.I."/>
            <person name="Pelan S."/>
            <person name="Phillimore B."/>
            <person name="Porter K."/>
            <person name="Rice C.M."/>
            <person name="Rogosin A."/>
            <person name="Ross M.T."/>
            <person name="Sarafidou T."/>
            <person name="Sehra H.K."/>
            <person name="Shownkeen R."/>
            <person name="Skuce C.D."/>
            <person name="Smith M."/>
            <person name="Standring L."/>
            <person name="Sycamore N."/>
            <person name="Tester J."/>
            <person name="Thorpe A."/>
            <person name="Torcasso W."/>
            <person name="Tracey A."/>
            <person name="Tromans A."/>
            <person name="Tsolas J."/>
            <person name="Wall M."/>
            <person name="Walsh J."/>
            <person name="Wang H."/>
            <person name="Weinstock K."/>
            <person name="West A.P."/>
            <person name="Willey D.L."/>
            <person name="Whitehead S.L."/>
            <person name="Wilming L."/>
            <person name="Wray P.W."/>
            <person name="Young L."/>
            <person name="Chen Y."/>
            <person name="Lovering R.C."/>
            <person name="Moschonas N.K."/>
            <person name="Siebert R."/>
            <person name="Fechtel K."/>
            <person name="Bentley D."/>
            <person name="Durbin R.M."/>
            <person name="Hubbard T."/>
            <person name="Doucette-Stamm L."/>
            <person name="Beck S."/>
            <person name="Smith D.R."/>
            <person name="Rogers J."/>
        </authorList>
    </citation>
    <scope>NUCLEOTIDE SEQUENCE [LARGE SCALE GENOMIC DNA]</scope>
</reference>
<reference key="5">
    <citation type="submission" date="2005-09" db="EMBL/GenBank/DDBJ databases">
        <authorList>
            <person name="Mural R.J."/>
            <person name="Istrail S."/>
            <person name="Sutton G."/>
            <person name="Florea L."/>
            <person name="Halpern A.L."/>
            <person name="Mobarry C.M."/>
            <person name="Lippert R."/>
            <person name="Walenz B."/>
            <person name="Shatkay H."/>
            <person name="Dew I."/>
            <person name="Miller J.R."/>
            <person name="Flanigan M.J."/>
            <person name="Edwards N.J."/>
            <person name="Bolanos R."/>
            <person name="Fasulo D."/>
            <person name="Halldorsson B.V."/>
            <person name="Hannenhalli S."/>
            <person name="Turner R."/>
            <person name="Yooseph S."/>
            <person name="Lu F."/>
            <person name="Nusskern D.R."/>
            <person name="Shue B.C."/>
            <person name="Zheng X.H."/>
            <person name="Zhong F."/>
            <person name="Delcher A.L."/>
            <person name="Huson D.H."/>
            <person name="Kravitz S.A."/>
            <person name="Mouchard L."/>
            <person name="Reinert K."/>
            <person name="Remington K.A."/>
            <person name="Clark A.G."/>
            <person name="Waterman M.S."/>
            <person name="Eichler E.E."/>
            <person name="Adams M.D."/>
            <person name="Hunkapiller M.W."/>
            <person name="Myers E.W."/>
            <person name="Venter J.C."/>
        </authorList>
    </citation>
    <scope>NUCLEOTIDE SEQUENCE [LARGE SCALE GENOMIC DNA]</scope>
</reference>
<reference key="6">
    <citation type="journal article" date="2004" name="Genome Res.">
        <title>The status, quality, and expansion of the NIH full-length cDNA project: the Mammalian Gene Collection (MGC).</title>
        <authorList>
            <consortium name="The MGC Project Team"/>
        </authorList>
    </citation>
    <scope>NUCLEOTIDE SEQUENCE [LARGE SCALE MRNA] (ISOFORMS 1 AND 2)</scope>
    <source>
        <tissue>Blood</tissue>
    </source>
</reference>
<reference key="7">
    <citation type="journal article" date="2008" name="J. Proteome Res.">
        <title>Phosphorylation analysis of primary human T lymphocytes using sequential IMAC and titanium oxide enrichment.</title>
        <authorList>
            <person name="Carrascal M."/>
            <person name="Ovelleiro D."/>
            <person name="Casas V."/>
            <person name="Gay M."/>
            <person name="Abian J."/>
        </authorList>
    </citation>
    <scope>IDENTIFICATION BY MASS SPECTROMETRY [LARGE SCALE ANALYSIS]</scope>
    <source>
        <tissue>T-cell</tissue>
    </source>
</reference>
<reference key="8">
    <citation type="journal article" date="2009" name="Sci. Signal.">
        <title>Quantitative phosphoproteomic analysis of T cell receptor signaling reveals system-wide modulation of protein-protein interactions.</title>
        <authorList>
            <person name="Mayya V."/>
            <person name="Lundgren D.H."/>
            <person name="Hwang S.-I."/>
            <person name="Rezaul K."/>
            <person name="Wu L."/>
            <person name="Eng J.K."/>
            <person name="Rodionov V."/>
            <person name="Han D.K."/>
        </authorList>
    </citation>
    <scope>PHOSPHORYLATION [LARGE SCALE ANALYSIS] AT SER-55 AND SER-526</scope>
    <scope>IDENTIFICATION BY MASS SPECTROMETRY [LARGE SCALE ANALYSIS]</scope>
    <source>
        <tissue>Leukemic T-cell</tissue>
    </source>
</reference>
<reference key="9">
    <citation type="journal article" date="2011" name="BMC Syst. Biol.">
        <title>Initial characterization of the human central proteome.</title>
        <authorList>
            <person name="Burkard T.R."/>
            <person name="Planyavsky M."/>
            <person name="Kaupe I."/>
            <person name="Breitwieser F.P."/>
            <person name="Buerckstuemmer T."/>
            <person name="Bennett K.L."/>
            <person name="Superti-Furga G."/>
            <person name="Colinge J."/>
        </authorList>
    </citation>
    <scope>IDENTIFICATION BY MASS SPECTROMETRY [LARGE SCALE ANALYSIS]</scope>
</reference>
<reference key="10">
    <citation type="journal article" date="2014" name="J. Proteomics">
        <title>An enzyme assisted RP-RPLC approach for in-depth analysis of human liver phosphoproteome.</title>
        <authorList>
            <person name="Bian Y."/>
            <person name="Song C."/>
            <person name="Cheng K."/>
            <person name="Dong M."/>
            <person name="Wang F."/>
            <person name="Huang J."/>
            <person name="Sun D."/>
            <person name="Wang L."/>
            <person name="Ye M."/>
            <person name="Zou H."/>
        </authorList>
    </citation>
    <scope>PHOSPHORYLATION [LARGE SCALE ANALYSIS] AT SER-526</scope>
    <scope>IDENTIFICATION BY MASS SPECTROMETRY [LARGE SCALE ANALYSIS]</scope>
    <source>
        <tissue>Liver</tissue>
    </source>
</reference>
<reference key="11">
    <citation type="journal article" date="2013" name="J. Biol. Chem.">
        <title>RIAM and vinculin binding to talin are mutually exclusive and regulate adhesion assembly and turnover.</title>
        <authorList>
            <person name="Goult B.T."/>
            <person name="Zacharchenko T."/>
            <person name="Bate N."/>
            <person name="Tsang R."/>
            <person name="Hey F."/>
            <person name="Gingras A.R."/>
            <person name="Elliott P.R."/>
            <person name="Roberts G.C."/>
            <person name="Ballestrem C."/>
            <person name="Critchley D.R."/>
            <person name="Barsukov I.L."/>
        </authorList>
    </citation>
    <scope>X-RAY CRYSTALLOGRAPHY (2.3 ANGSTROMS) OF 1-31 IN COMPLEX WITH VCL</scope>
    <scope>INTERACTION WITH VCL AND TLN1</scope>
</reference>
<feature type="chain" id="PRO_0000181347" description="Amyloid beta A4 precursor protein-binding family B member 1-interacting protein">
    <location>
        <begin position="1"/>
        <end position="666"/>
    </location>
</feature>
<feature type="domain" description="Ras-associating" evidence="4">
    <location>
        <begin position="176"/>
        <end position="263"/>
    </location>
</feature>
<feature type="domain" description="PH" evidence="3">
    <location>
        <begin position="310"/>
        <end position="419"/>
    </location>
</feature>
<feature type="region of interest" description="Disordered" evidence="5">
    <location>
        <begin position="122"/>
        <end position="155"/>
    </location>
</feature>
<feature type="region of interest" description="Disordered" evidence="5">
    <location>
        <begin position="448"/>
        <end position="666"/>
    </location>
</feature>
<feature type="compositionally biased region" description="Pro residues" evidence="5">
    <location>
        <begin position="129"/>
        <end position="148"/>
    </location>
</feature>
<feature type="compositionally biased region" description="Polar residues" evidence="5">
    <location>
        <begin position="453"/>
        <end position="478"/>
    </location>
</feature>
<feature type="compositionally biased region" description="Basic and acidic residues" evidence="5">
    <location>
        <begin position="483"/>
        <end position="504"/>
    </location>
</feature>
<feature type="compositionally biased region" description="Pro residues" evidence="5">
    <location>
        <begin position="547"/>
        <end position="589"/>
    </location>
</feature>
<feature type="compositionally biased region" description="Pro residues" evidence="5">
    <location>
        <begin position="598"/>
        <end position="631"/>
    </location>
</feature>
<feature type="modified residue" description="Phosphoserine" evidence="11">
    <location>
        <position position="55"/>
    </location>
</feature>
<feature type="modified residue" description="Phosphoserine" evidence="11 12">
    <location>
        <position position="526"/>
    </location>
</feature>
<feature type="modified residue" description="Phosphothreonine" evidence="2">
    <location>
        <position position="528"/>
    </location>
</feature>
<feature type="modified residue" description="Phosphoserine" evidence="2">
    <location>
        <position position="531"/>
    </location>
</feature>
<feature type="splice variant" id="VSP_056542" description="In isoform 2." evidence="9">
    <original>EEEEAQAKADKIKLALEKLKE</original>
    <variation>VSMWDQRWQDHQPLLPITDVP</variation>
    <location>
        <begin position="152"/>
        <end position="172"/>
    </location>
</feature>
<feature type="splice variant" id="VSP_056543" description="In isoform 2." evidence="9">
    <location>
        <begin position="173"/>
        <end position="666"/>
    </location>
</feature>
<feature type="sequence variant" id="VAR_050098" description="In dbSNP:rs34081356.">
    <original>T</original>
    <variation>A</variation>
    <location>
        <position position="404"/>
    </location>
</feature>
<feature type="sequence variant" id="VAR_059447" description="In dbSNP:rs7903226.">
    <original>A</original>
    <variation>T</variation>
    <location>
        <position position="617"/>
    </location>
</feature>
<feature type="sequence conflict" description="In Ref. 1; BAC41256." evidence="10" ref="1">
    <original>L</original>
    <variation>F</variation>
    <location>
        <position position="423"/>
    </location>
</feature>
<feature type="sequence conflict" description="In Ref. 2; AAN75525." evidence="10" ref="2">
    <location>
        <position position="599"/>
    </location>
</feature>
<feature type="helix" evidence="13">
    <location>
        <begin position="8"/>
        <end position="25"/>
    </location>
</feature>
<feature type="turn" evidence="13">
    <location>
        <begin position="26"/>
        <end position="31"/>
    </location>
</feature>
<sequence length="666" mass="73183">MGESSEDIDQMFSTLLGEMDLLTQSLGVDTLPPPDPNPPRAEFNYSVGFKDLNESLNALEDQDLDALMADLVADISEAEQRTIQAQKESLQNQHHSASLQASIFSGAASLGYGTNVAATGISQYEDDLPPPPADPVLDLPLPPPPPEPLSQEEEEAQAKADKIKLALEKLKEAKVKKLVVKVHMNDNSTKSLMVDERQLARDVLDNLFEKTHCDCNVDWCLYEIYPELQIERFFEDHENVVEVLSDWTRDTENKILFLEKEEKYAVFKNPQNFYLDNRGKKESKETNEKMNAKNKESLLEESFCGTSIIVPELEGALYLKEDGKKSWKRRYFLLRASGIYYVPKGKTKTSRDLACFIQFENVNIYYGTQHKMKYKAPTDYCFVLKHPQIQKESQYIKYLCCDDTRTLNQWVMGIRIAKYGKTLYDNYQRAVAKAGLASRWTNLGTVNAAAPAQPSTGPKTGTTQPNGQIPQATHSVSAVLQEAQRHAETSKDKKPALGNHHDPAVPRAPHAPKSSLPPPPPVRRSSDTSGSPATPLKAKGTGGGGLPAPPDDFLPPPPPPPPLDDPELPPPPPDFMEPPPDFVPPPPPSYAGIAGSELPPPPPPPPAPAPAPVPDSARPPPAVAKRPPVPPKRQENPGHPGGAGGGEQDFMSDLMKALQKKRGNVS</sequence>
<dbReference type="EMBL" id="AB085852">
    <property type="protein sequence ID" value="BAC41256.1"/>
    <property type="molecule type" value="mRNA"/>
</dbReference>
<dbReference type="EMBL" id="AY152730">
    <property type="protein sequence ID" value="AAN75525.1"/>
    <property type="molecule type" value="mRNA"/>
</dbReference>
<dbReference type="EMBL" id="AL160287">
    <property type="status" value="NOT_ANNOTATED_CDS"/>
    <property type="molecule type" value="Genomic_DNA"/>
</dbReference>
<dbReference type="EMBL" id="AL355798">
    <property type="status" value="NOT_ANNOTATED_CDS"/>
    <property type="molecule type" value="Genomic_DNA"/>
</dbReference>
<dbReference type="EMBL" id="CH471072">
    <property type="protein sequence ID" value="EAW86097.1"/>
    <property type="molecule type" value="Genomic_DNA"/>
</dbReference>
<dbReference type="EMBL" id="BC035636">
    <property type="protein sequence ID" value="AAH35636.1"/>
    <property type="molecule type" value="mRNA"/>
</dbReference>
<dbReference type="EMBL" id="BC054516">
    <property type="protein sequence ID" value="AAH54516.1"/>
    <property type="molecule type" value="mRNA"/>
</dbReference>
<dbReference type="CCDS" id="CCDS31167.1">
    <molecule id="Q7Z5R6-1"/>
</dbReference>
<dbReference type="RefSeq" id="NP_061916.3">
    <molecule id="Q7Z5R6-1"/>
    <property type="nucleotide sequence ID" value="NM_019043.3"/>
</dbReference>
<dbReference type="RefSeq" id="XP_006717514.1">
    <property type="nucleotide sequence ID" value="XM_006717451.2"/>
</dbReference>
<dbReference type="PDB" id="2MWN">
    <property type="method" value="NMR"/>
    <property type="chains" value="A=7-30"/>
</dbReference>
<dbReference type="PDB" id="3ZDL">
    <property type="method" value="X-ray"/>
    <property type="resolution" value="2.30 A"/>
    <property type="chains" value="B=1-31"/>
</dbReference>
<dbReference type="PDBsum" id="2MWN"/>
<dbReference type="PDBsum" id="3ZDL"/>
<dbReference type="BMRB" id="Q7Z5R6"/>
<dbReference type="SMR" id="Q7Z5R6"/>
<dbReference type="BioGRID" id="120012">
    <property type="interactions" value="18"/>
</dbReference>
<dbReference type="CORUM" id="Q7Z5R6"/>
<dbReference type="FunCoup" id="Q7Z5R6">
    <property type="interactions" value="1338"/>
</dbReference>
<dbReference type="IntAct" id="Q7Z5R6">
    <property type="interactions" value="17"/>
</dbReference>
<dbReference type="MINT" id="Q7Z5R6"/>
<dbReference type="STRING" id="9606.ENSP00000365411"/>
<dbReference type="iPTMnet" id="Q7Z5R6"/>
<dbReference type="PhosphoSitePlus" id="Q7Z5R6"/>
<dbReference type="BioMuta" id="APBB1IP"/>
<dbReference type="DMDM" id="74750143"/>
<dbReference type="jPOST" id="Q7Z5R6"/>
<dbReference type="MassIVE" id="Q7Z5R6"/>
<dbReference type="PaxDb" id="9606-ENSP00000365411"/>
<dbReference type="PeptideAtlas" id="Q7Z5R6"/>
<dbReference type="ProteomicsDB" id="69350">
    <molecule id="Q7Z5R6-1"/>
</dbReference>
<dbReference type="ProteomicsDB" id="71199"/>
<dbReference type="Antibodypedia" id="38122">
    <property type="antibodies" value="248 antibodies from 29 providers"/>
</dbReference>
<dbReference type="DNASU" id="54518"/>
<dbReference type="Ensembl" id="ENST00000356785.4">
    <molecule id="Q7Z5R6-2"/>
    <property type="protein sequence ID" value="ENSP00000349237.4"/>
    <property type="gene ID" value="ENSG00000077420.17"/>
</dbReference>
<dbReference type="Ensembl" id="ENST00000376236.9">
    <molecule id="Q7Z5R6-1"/>
    <property type="protein sequence ID" value="ENSP00000365411.4"/>
    <property type="gene ID" value="ENSG00000077420.17"/>
</dbReference>
<dbReference type="Ensembl" id="ENST00000718302.1">
    <molecule id="Q7Z5R6-1"/>
    <property type="protein sequence ID" value="ENSP00000520735.1"/>
    <property type="gene ID" value="ENSG00000077420.17"/>
</dbReference>
<dbReference type="GeneID" id="54518"/>
<dbReference type="KEGG" id="hsa:54518"/>
<dbReference type="MANE-Select" id="ENST00000376236.9">
    <property type="protein sequence ID" value="ENSP00000365411.4"/>
    <property type="RefSeq nucleotide sequence ID" value="NM_019043.4"/>
    <property type="RefSeq protein sequence ID" value="NP_061916.3"/>
</dbReference>
<dbReference type="UCSC" id="uc001isr.4">
    <molecule id="Q7Z5R6-1"/>
    <property type="organism name" value="human"/>
</dbReference>
<dbReference type="AGR" id="HGNC:17379"/>
<dbReference type="CTD" id="54518"/>
<dbReference type="DisGeNET" id="54518"/>
<dbReference type="GeneCards" id="APBB1IP"/>
<dbReference type="HGNC" id="HGNC:17379">
    <property type="gene designation" value="APBB1IP"/>
</dbReference>
<dbReference type="HPA" id="ENSG00000077420">
    <property type="expression patterns" value="Tissue enhanced (lymphoid)"/>
</dbReference>
<dbReference type="MIM" id="609036">
    <property type="type" value="gene"/>
</dbReference>
<dbReference type="neXtProt" id="NX_Q7Z5R6"/>
<dbReference type="OpenTargets" id="ENSG00000077420"/>
<dbReference type="PharmGKB" id="PA134933955"/>
<dbReference type="VEuPathDB" id="HostDB:ENSG00000077420"/>
<dbReference type="eggNOG" id="KOG3751">
    <property type="taxonomic scope" value="Eukaryota"/>
</dbReference>
<dbReference type="GeneTree" id="ENSGT00940000156105"/>
<dbReference type="HOGENOM" id="CLU_023207_2_0_1"/>
<dbReference type="InParanoid" id="Q7Z5R6"/>
<dbReference type="OMA" id="CCDDQAT"/>
<dbReference type="OrthoDB" id="6235964at2759"/>
<dbReference type="PAN-GO" id="Q7Z5R6">
    <property type="GO annotations" value="2 GO annotations based on evolutionary models"/>
</dbReference>
<dbReference type="PhylomeDB" id="Q7Z5R6"/>
<dbReference type="TreeFam" id="TF317511"/>
<dbReference type="PathwayCommons" id="Q7Z5R6"/>
<dbReference type="Reactome" id="R-HSA-354192">
    <property type="pathway name" value="Integrin signaling"/>
</dbReference>
<dbReference type="Reactome" id="R-HSA-354194">
    <property type="pathway name" value="GRB2:SOS provides linkage to MAPK signaling for Integrins"/>
</dbReference>
<dbReference type="Reactome" id="R-HSA-372708">
    <property type="pathway name" value="p130Cas linkage to MAPK signaling for integrins"/>
</dbReference>
<dbReference type="Reactome" id="R-HSA-5674135">
    <property type="pathway name" value="MAP2K and MAPK activation"/>
</dbReference>
<dbReference type="Reactome" id="R-HSA-6802946">
    <property type="pathway name" value="Signaling by moderate kinase activity BRAF mutants"/>
</dbReference>
<dbReference type="Reactome" id="R-HSA-6802948">
    <property type="pathway name" value="Signaling by high-kinase activity BRAF mutants"/>
</dbReference>
<dbReference type="Reactome" id="R-HSA-6802952">
    <property type="pathway name" value="Signaling by BRAF and RAF1 fusions"/>
</dbReference>
<dbReference type="Reactome" id="R-HSA-6802955">
    <property type="pathway name" value="Paradoxical activation of RAF signaling by kinase inactive BRAF"/>
</dbReference>
<dbReference type="Reactome" id="R-HSA-9649948">
    <property type="pathway name" value="Signaling downstream of RAS mutants"/>
</dbReference>
<dbReference type="Reactome" id="R-HSA-9656223">
    <property type="pathway name" value="Signaling by RAF1 mutants"/>
</dbReference>
<dbReference type="SignaLink" id="Q7Z5R6"/>
<dbReference type="BioGRID-ORCS" id="54518">
    <property type="hits" value="18 hits in 1143 CRISPR screens"/>
</dbReference>
<dbReference type="ChiTaRS" id="APBB1IP">
    <property type="organism name" value="human"/>
</dbReference>
<dbReference type="EvolutionaryTrace" id="Q7Z5R6"/>
<dbReference type="GeneWiki" id="APBB1IP"/>
<dbReference type="GenomeRNAi" id="54518"/>
<dbReference type="Pharos" id="Q7Z5R6">
    <property type="development level" value="Tbio"/>
</dbReference>
<dbReference type="PRO" id="PR:Q7Z5R6"/>
<dbReference type="Proteomes" id="UP000005640">
    <property type="component" value="Chromosome 10"/>
</dbReference>
<dbReference type="RNAct" id="Q7Z5R6">
    <property type="molecule type" value="protein"/>
</dbReference>
<dbReference type="Bgee" id="ENSG00000077420">
    <property type="expression patterns" value="Expressed in blood and 173 other cell types or tissues"/>
</dbReference>
<dbReference type="GO" id="GO:0005856">
    <property type="term" value="C:cytoskeleton"/>
    <property type="evidence" value="ECO:0007669"/>
    <property type="project" value="UniProtKB-SubCell"/>
</dbReference>
<dbReference type="GO" id="GO:0005829">
    <property type="term" value="C:cytosol"/>
    <property type="evidence" value="ECO:0000314"/>
    <property type="project" value="HPA"/>
</dbReference>
<dbReference type="GO" id="GO:0005925">
    <property type="term" value="C:focal adhesion"/>
    <property type="evidence" value="ECO:0007669"/>
    <property type="project" value="UniProtKB-SubCell"/>
</dbReference>
<dbReference type="GO" id="GO:0030027">
    <property type="term" value="C:lamellipodium"/>
    <property type="evidence" value="ECO:0007669"/>
    <property type="project" value="UniProtKB-SubCell"/>
</dbReference>
<dbReference type="GO" id="GO:0005886">
    <property type="term" value="C:plasma membrane"/>
    <property type="evidence" value="ECO:0000314"/>
    <property type="project" value="HPA"/>
</dbReference>
<dbReference type="GO" id="GO:0042101">
    <property type="term" value="C:T cell receptor complex"/>
    <property type="evidence" value="ECO:0007669"/>
    <property type="project" value="Ensembl"/>
</dbReference>
<dbReference type="GO" id="GO:0045785">
    <property type="term" value="P:positive regulation of cell adhesion"/>
    <property type="evidence" value="ECO:0007669"/>
    <property type="project" value="Ensembl"/>
</dbReference>
<dbReference type="GO" id="GO:0007165">
    <property type="term" value="P:signal transduction"/>
    <property type="evidence" value="ECO:0007669"/>
    <property type="project" value="InterPro"/>
</dbReference>
<dbReference type="GO" id="GO:0002291">
    <property type="term" value="P:T cell activation via T cell receptor contact with antigen bound to MHC molecule on antigen presenting cell"/>
    <property type="evidence" value="ECO:0007669"/>
    <property type="project" value="Ensembl"/>
</dbReference>
<dbReference type="CDD" id="cd01259">
    <property type="entry name" value="PH_APBB1IP"/>
    <property type="match status" value="1"/>
</dbReference>
<dbReference type="CDD" id="cd16137">
    <property type="entry name" value="RA_MRL_RIAM"/>
    <property type="match status" value="1"/>
</dbReference>
<dbReference type="FunFam" id="3.10.20.90:FF:000124">
    <property type="entry name" value="amyloid beta A4 precursor protein-binding family B member 1-interacting protein-like"/>
    <property type="match status" value="1"/>
</dbReference>
<dbReference type="FunFam" id="2.30.29.30:FF:000048">
    <property type="entry name" value="Ras association (RalGDS/AF-6) and pleckstrin homology domains 1"/>
    <property type="match status" value="1"/>
</dbReference>
<dbReference type="Gene3D" id="3.10.20.90">
    <property type="entry name" value="Phosphatidylinositol 3-kinase Catalytic Subunit, Chain A, domain 1"/>
    <property type="match status" value="1"/>
</dbReference>
<dbReference type="Gene3D" id="2.30.29.30">
    <property type="entry name" value="Pleckstrin-homology domain (PH domain)/Phosphotyrosine-binding domain (PTB)"/>
    <property type="match status" value="1"/>
</dbReference>
<dbReference type="IDEAL" id="IID00572"/>
<dbReference type="InterPro" id="IPR039664">
    <property type="entry name" value="GRB/APBB1IP"/>
</dbReference>
<dbReference type="InterPro" id="IPR011993">
    <property type="entry name" value="PH-like_dom_sf"/>
</dbReference>
<dbReference type="InterPro" id="IPR039665">
    <property type="entry name" value="PH_APBB1IP"/>
</dbReference>
<dbReference type="InterPro" id="IPR001849">
    <property type="entry name" value="PH_domain"/>
</dbReference>
<dbReference type="InterPro" id="IPR000159">
    <property type="entry name" value="RA_dom"/>
</dbReference>
<dbReference type="InterPro" id="IPR029071">
    <property type="entry name" value="Ubiquitin-like_domsf"/>
</dbReference>
<dbReference type="PANTHER" id="PTHR11243:SF14">
    <property type="entry name" value="AMYLOID BETA A4 PRECURSOR PROTEIN-BINDING FAMILY B MEMBER 1-INTERACTING PROTEIN"/>
    <property type="match status" value="1"/>
</dbReference>
<dbReference type="PANTHER" id="PTHR11243">
    <property type="entry name" value="GROWTH FACTOR RECEPTOR-BOUND PROTEIN"/>
    <property type="match status" value="1"/>
</dbReference>
<dbReference type="Pfam" id="PF00169">
    <property type="entry name" value="PH"/>
    <property type="match status" value="1"/>
</dbReference>
<dbReference type="Pfam" id="PF21989">
    <property type="entry name" value="RA_2"/>
    <property type="match status" value="1"/>
</dbReference>
<dbReference type="SMART" id="SM00233">
    <property type="entry name" value="PH"/>
    <property type="match status" value="1"/>
</dbReference>
<dbReference type="SMART" id="SM00314">
    <property type="entry name" value="RA"/>
    <property type="match status" value="1"/>
</dbReference>
<dbReference type="SUPFAM" id="SSF50729">
    <property type="entry name" value="PH domain-like"/>
    <property type="match status" value="1"/>
</dbReference>
<dbReference type="SUPFAM" id="SSF54236">
    <property type="entry name" value="Ubiquitin-like"/>
    <property type="match status" value="1"/>
</dbReference>
<dbReference type="PROSITE" id="PS50003">
    <property type="entry name" value="PH_DOMAIN"/>
    <property type="match status" value="1"/>
</dbReference>
<dbReference type="PROSITE" id="PS50200">
    <property type="entry name" value="RA"/>
    <property type="match status" value="1"/>
</dbReference>
<gene>
    <name type="primary">APBB1IP</name>
    <name type="synonym">PREL1</name>
    <name type="synonym">RARP1</name>
    <name type="synonym">RIAM</name>
</gene>
<comment type="function">
    <text evidence="6 7">Appears to function in the signal transduction from Ras activation to actin cytoskeletal remodeling. Suppresses insulin-induced promoter activities through AP1 and SRE. Mediates Rap1-induced adhesion.</text>
</comment>
<comment type="subunit">
    <text evidence="7 8">Interacts, through the N-terminal Pro-rich region, with the WW domain of APBB1. Interacts with RAP1A, PFN1, TLN1, VASP, VCL and ENAH.</text>
</comment>
<comment type="interaction">
    <interactant intactId="EBI-2818084">
        <id>Q7Z5R6</id>
    </interactant>
    <interactant intactId="EBI-524753">
        <id>Q8IUH5</id>
        <label>ZDHHC17</label>
    </interactant>
    <organismsDiffer>false</organismsDiffer>
    <experiments>2</experiments>
</comment>
<comment type="interaction">
    <interactant intactId="EBI-12059807">
        <id>Q7Z5R6-2</id>
    </interactant>
    <interactant intactId="EBI-10988864">
        <id>P46379-2</id>
        <label>BAG6</label>
    </interactant>
    <organismsDiffer>false</organismsDiffer>
    <experiments>3</experiments>
</comment>
<comment type="interaction">
    <interactant intactId="EBI-12059807">
        <id>Q7Z5R6-2</id>
    </interactant>
    <interactant intactId="EBI-3939165">
        <id>O43711</id>
        <label>TLX3</label>
    </interactant>
    <organismsDiffer>false</organismsDiffer>
    <experiments>3</experiments>
</comment>
<comment type="subcellular location">
    <subcellularLocation>
        <location evidence="1">Cell membrane</location>
        <topology evidence="1">Peripheral membrane protein</topology>
    </subcellularLocation>
    <subcellularLocation>
        <location evidence="1">Cell projection</location>
        <location evidence="1">Lamellipodium</location>
    </subcellularLocation>
    <subcellularLocation>
        <location evidence="1">Cell junction</location>
        <location evidence="1">Focal adhesion</location>
    </subcellularLocation>
    <subcellularLocation>
        <location evidence="1">Cytoplasm</location>
        <location evidence="1">Cytoskeleton</location>
    </subcellularLocation>
    <text evidence="1">Colocalizes with ENA/VASP proteins at lamellipodia tips and focal adhesions, and F-actin at the leading edge. At the membrane surface, associates, via the PH domain, preferentially with the inositol phosphates, PtdIns(5)P and PtdIns(3)P. This binding appears to be necessary for the efficient interaction of the RA domain to Ras-GTPases (By similarity).</text>
</comment>
<comment type="alternative products">
    <event type="alternative splicing"/>
    <isoform>
        <id>Q7Z5R6-1</id>
        <name>1</name>
        <sequence type="displayed"/>
    </isoform>
    <isoform>
        <id>Q7Z5R6-2</id>
        <name>2</name>
        <sequence type="described" ref="VSP_056542 VSP_056543"/>
    </isoform>
</comment>
<comment type="tissue specificity">
    <text evidence="6 7">Widely expressed with high expression in thymus, spleen, lymph node, bone marrow and peripheral leukocytes.</text>
</comment>
<comment type="induction">
    <text>By all-trans-retinoic acid (ATRA).</text>
</comment>
<comment type="domain">
    <text>The two Pro-rich regions are required for the suppression of AP1 transcription activity.</text>
</comment>
<comment type="similarity">
    <text evidence="10">Belongs to the MRL family.</text>
</comment>
<protein>
    <recommendedName>
        <fullName>Amyloid beta A4 precursor protein-binding family B member 1-interacting protein</fullName>
    </recommendedName>
    <alternativeName>
        <fullName>APBB1-interacting protein 1</fullName>
    </alternativeName>
    <alternativeName>
        <fullName>Proline-rich EVH1 ligand 1</fullName>
        <shortName>PREL-1</shortName>
    </alternativeName>
    <alternativeName>
        <fullName>Proline-rich protein 73</fullName>
    </alternativeName>
    <alternativeName>
        <fullName>Rap1-GTP-interacting adapter molecule</fullName>
        <shortName>RIAM</shortName>
    </alternativeName>
    <alternativeName>
        <fullName>Retinoic acid-responsive proline-rich protein 1</fullName>
        <shortName>RARP-1</shortName>
    </alternativeName>
</protein>
<name>AB1IP_HUMAN</name>
<proteinExistence type="evidence at protein level"/>